<comment type="function">
    <text evidence="1 3 5">Substrate-recognition component of a DCX (DDB1-CUL4-X-box) E3 ubiquitin-protein ligase complex required for cell cycle control (PubMed:20551172, PubMed:29779948). The DCX(TRPC4AP) complex specifically mediates the polyubiquitination and subsequent degradation of MYC as part of the DesCEND (destruction via C-end degrons) pathway (PubMed:20551172, PubMed:29779948). The DesCEND (destruction via C-end degrons) pathway recognizes a C-degron located at the extreme C terminus of target proteins, leading to their ubiquitination and degradation (PubMed:29779948). The DCX(TRPC4AP) complex specifically recognizes proteins with an arginine at the minus 3 position (R-3 motif) at the C-terminus, such as MYC, leading to their ubiquitination and degradation (PubMed:29779948). Also participates in the activation of NFKB1 in response to ligation of TNFRSF1A, possibly by linking TNFRSF1A to the IKK signalosome (By similarity). Involved in JNK activation via its interaction with TRAF2 (By similarity). Also involved in elevation of endoplasmic reticulum Ca(2+) storage reduction in response to CHRM1 (By similarity).</text>
</comment>
<comment type="pathway">
    <text evidence="3">Protein modification; protein ubiquitination.</text>
</comment>
<comment type="subunit">
    <text evidence="1 2 3">Component of the DCX(TRPC4AP) E3 ubiquitin ligase complex, at least composed of CUL4A, DDB1, TRPC4AP/TRUSS and RBX1 (PubMed:19966799, PubMed:20551172). Interacts with MYC (PubMed:20551172). Constitutively associated with TNFRSF1A (By similarity). Directly interacts with TRADD, TRAF2, CHUK, IKBKB and IKBKG (By similarity). Interacts with TRPC1, TRPC4 and TRPC5 (By similarity).</text>
</comment>
<comment type="subunit">
    <text evidence="4">(Microbial infection) Interacts with Hepatitis B virus (HBV) protein X; leading to prevent ubiquitination of TRPC4AP by SKP2.</text>
</comment>
<comment type="interaction">
    <interactant intactId="EBI-2559060">
        <id>Q8TEL6</id>
    </interactant>
    <interactant intactId="EBI-357253">
        <id>P62136</id>
        <label>PPP1CA</label>
    </interactant>
    <organismsDiffer>false</organismsDiffer>
    <experiments>2</experiments>
</comment>
<comment type="subcellular location">
    <subcellularLocation>
        <location evidence="4">Cytoplasm</location>
        <location evidence="4">Perinuclear region</location>
    </subcellularLocation>
</comment>
<comment type="alternative products">
    <event type="alternative splicing"/>
    <isoform>
        <id>Q8TEL6-1</id>
        <name>1</name>
        <sequence type="displayed"/>
    </isoform>
    <isoform>
        <id>Q8TEL6-2</id>
        <name>2</name>
        <sequence type="described" ref="VSP_003982"/>
    </isoform>
    <isoform>
        <id>Q8TEL6-3</id>
        <name>3</name>
        <sequence type="described" ref="VSP_054231"/>
    </isoform>
</comment>
<comment type="PTM">
    <text evidence="4">Phosphorylated by GSK3B; phosphorylation is required for ubiquitination.</text>
</comment>
<comment type="PTM">
    <text evidence="4">Ubiquitinated by a SCF (SKP1-CUL1-F-box protein) E3 ubiquitin-protein ligase containing SKP2, leading to its degradation (PubMed:26038816). Phosphorylation by GSK3B is required for ubiquitination (PubMed:26038816).</text>
</comment>
<comment type="sequence caution" evidence="9">
    <conflict type="frameshift">
        <sequence resource="EMBL-CDS" id="BAB84932"/>
    </conflict>
</comment>
<name>TP4AP_HUMAN</name>
<organism>
    <name type="scientific">Homo sapiens</name>
    <name type="common">Human</name>
    <dbReference type="NCBI Taxonomy" id="9606"/>
    <lineage>
        <taxon>Eukaryota</taxon>
        <taxon>Metazoa</taxon>
        <taxon>Chordata</taxon>
        <taxon>Craniata</taxon>
        <taxon>Vertebrata</taxon>
        <taxon>Euteleostomi</taxon>
        <taxon>Mammalia</taxon>
        <taxon>Eutheria</taxon>
        <taxon>Euarchontoglires</taxon>
        <taxon>Primates</taxon>
        <taxon>Haplorrhini</taxon>
        <taxon>Catarrhini</taxon>
        <taxon>Hominidae</taxon>
        <taxon>Homo</taxon>
    </lineage>
</organism>
<sequence>MAAAPVAAGSGAGRGRRSAATVAAWGGWGGRPRPGNILLQLRQGQLTGRGLVRAVQFTETFLTERDKQSKWSGIPQLLLKLHTTSHLHSDFVECQNILKEISPLLSMEAMAFVTEERKLTQETTYPNTYIFDLFGGVDLLVEILMRPTISIRGQKLKISDEMSKDCLSILYNTCVCTEGVTKRLAEKNDFVIFLFTLMTSKKTFLQTATLIEDILGVKKEMIRLDEVPNLSSLVSNFDQQQLANFCRILAVTISEMDTGNDDKHTLLAKNAQQKKSLSLGPSAAEINQAALLSIPGFVERLCKLATRKVSESTGTASFLQELEEWYTWLDNALVLDALMRVANEESEHNQASIVFPPPGASEENGLPHTSARTQLPQSMKIMHEIMYKLEVLYVLCVLLMGRQRNQVHRMIAEFKLIPGLNNLFDKLIWRKHSASALVLHGHNQNCDCSPDITLKIQFLRLLQSFSDHHENKYLLLNNQELNELSAISLKANIPEVEAVLNTDRSLVCDGKRGLLTRLLQVMKKEPAESSFRFWQARAVESFLRGTTSYADQMFLLKRGLLEHILYCIVDSECKSRDVLQSYFDLLGELMKFNVDAFKRFNKYINTDAKFQVFLKQINSSLVDSNMLVRCVTLSLDRFENQVDMKVAEVLSECRLLAYISQVPTQMSFLFRLINIIHVQTLTQENVSCLNTSLVILMLARRKERLPLYLRLLQRMEHSKKYPGFLLNNFHNLLRFWQQHYLHKDKDSTCLENSSCISFSYWKETVSILLNPDRQSPSALVSYIEEPYMDIDRDFTEE</sequence>
<reference key="1">
    <citation type="journal article" date="2004" name="Nat. Genet.">
        <title>Complete sequencing and characterization of 21,243 full-length human cDNAs.</title>
        <authorList>
            <person name="Ota T."/>
            <person name="Suzuki Y."/>
            <person name="Nishikawa T."/>
            <person name="Otsuki T."/>
            <person name="Sugiyama T."/>
            <person name="Irie R."/>
            <person name="Wakamatsu A."/>
            <person name="Hayashi K."/>
            <person name="Sato H."/>
            <person name="Nagai K."/>
            <person name="Kimura K."/>
            <person name="Makita H."/>
            <person name="Sekine M."/>
            <person name="Obayashi M."/>
            <person name="Nishi T."/>
            <person name="Shibahara T."/>
            <person name="Tanaka T."/>
            <person name="Ishii S."/>
            <person name="Yamamoto J."/>
            <person name="Saito K."/>
            <person name="Kawai Y."/>
            <person name="Isono Y."/>
            <person name="Nakamura Y."/>
            <person name="Nagahari K."/>
            <person name="Murakami K."/>
            <person name="Yasuda T."/>
            <person name="Iwayanagi T."/>
            <person name="Wagatsuma M."/>
            <person name="Shiratori A."/>
            <person name="Sudo H."/>
            <person name="Hosoiri T."/>
            <person name="Kaku Y."/>
            <person name="Kodaira H."/>
            <person name="Kondo H."/>
            <person name="Sugawara M."/>
            <person name="Takahashi M."/>
            <person name="Kanda K."/>
            <person name="Yokoi T."/>
            <person name="Furuya T."/>
            <person name="Kikkawa E."/>
            <person name="Omura Y."/>
            <person name="Abe K."/>
            <person name="Kamihara K."/>
            <person name="Katsuta N."/>
            <person name="Sato K."/>
            <person name="Tanikawa M."/>
            <person name="Yamazaki M."/>
            <person name="Ninomiya K."/>
            <person name="Ishibashi T."/>
            <person name="Yamashita H."/>
            <person name="Murakawa K."/>
            <person name="Fujimori K."/>
            <person name="Tanai H."/>
            <person name="Kimata M."/>
            <person name="Watanabe M."/>
            <person name="Hiraoka S."/>
            <person name="Chiba Y."/>
            <person name="Ishida S."/>
            <person name="Ono Y."/>
            <person name="Takiguchi S."/>
            <person name="Watanabe S."/>
            <person name="Yosida M."/>
            <person name="Hotuta T."/>
            <person name="Kusano J."/>
            <person name="Kanehori K."/>
            <person name="Takahashi-Fujii A."/>
            <person name="Hara H."/>
            <person name="Tanase T.-O."/>
            <person name="Nomura Y."/>
            <person name="Togiya S."/>
            <person name="Komai F."/>
            <person name="Hara R."/>
            <person name="Takeuchi K."/>
            <person name="Arita M."/>
            <person name="Imose N."/>
            <person name="Musashino K."/>
            <person name="Yuuki H."/>
            <person name="Oshima A."/>
            <person name="Sasaki N."/>
            <person name="Aotsuka S."/>
            <person name="Yoshikawa Y."/>
            <person name="Matsunawa H."/>
            <person name="Ichihara T."/>
            <person name="Shiohata N."/>
            <person name="Sano S."/>
            <person name="Moriya S."/>
            <person name="Momiyama H."/>
            <person name="Satoh N."/>
            <person name="Takami S."/>
            <person name="Terashima Y."/>
            <person name="Suzuki O."/>
            <person name="Nakagawa S."/>
            <person name="Senoh A."/>
            <person name="Mizoguchi H."/>
            <person name="Goto Y."/>
            <person name="Shimizu F."/>
            <person name="Wakebe H."/>
            <person name="Hishigaki H."/>
            <person name="Watanabe T."/>
            <person name="Sugiyama A."/>
            <person name="Takemoto M."/>
            <person name="Kawakami B."/>
            <person name="Yamazaki M."/>
            <person name="Watanabe K."/>
            <person name="Kumagai A."/>
            <person name="Itakura S."/>
            <person name="Fukuzumi Y."/>
            <person name="Fujimori Y."/>
            <person name="Komiyama M."/>
            <person name="Tashiro H."/>
            <person name="Tanigami A."/>
            <person name="Fujiwara T."/>
            <person name="Ono T."/>
            <person name="Yamada K."/>
            <person name="Fujii Y."/>
            <person name="Ozaki K."/>
            <person name="Hirao M."/>
            <person name="Ohmori Y."/>
            <person name="Kawabata A."/>
            <person name="Hikiji T."/>
            <person name="Kobatake N."/>
            <person name="Inagaki H."/>
            <person name="Ikema Y."/>
            <person name="Okamoto S."/>
            <person name="Okitani R."/>
            <person name="Kawakami T."/>
            <person name="Noguchi S."/>
            <person name="Itoh T."/>
            <person name="Shigeta K."/>
            <person name="Senba T."/>
            <person name="Matsumura K."/>
            <person name="Nakajima Y."/>
            <person name="Mizuno T."/>
            <person name="Morinaga M."/>
            <person name="Sasaki M."/>
            <person name="Togashi T."/>
            <person name="Oyama M."/>
            <person name="Hata H."/>
            <person name="Watanabe M."/>
            <person name="Komatsu T."/>
            <person name="Mizushima-Sugano J."/>
            <person name="Satoh T."/>
            <person name="Shirai Y."/>
            <person name="Takahashi Y."/>
            <person name="Nakagawa K."/>
            <person name="Okumura K."/>
            <person name="Nagase T."/>
            <person name="Nomura N."/>
            <person name="Kikuchi H."/>
            <person name="Masuho Y."/>
            <person name="Yamashita R."/>
            <person name="Nakai K."/>
            <person name="Yada T."/>
            <person name="Nakamura Y."/>
            <person name="Ohara O."/>
            <person name="Isogai T."/>
            <person name="Sugano S."/>
        </authorList>
    </citation>
    <scope>NUCLEOTIDE SEQUENCE [LARGE SCALE MRNA] (ISOFORMS 2 AND 3)</scope>
</reference>
<reference key="2">
    <citation type="journal article" date="2001" name="Nature">
        <title>The DNA sequence and comparative analysis of human chromosome 20.</title>
        <authorList>
            <person name="Deloukas P."/>
            <person name="Matthews L.H."/>
            <person name="Ashurst J.L."/>
            <person name="Burton J."/>
            <person name="Gilbert J.G.R."/>
            <person name="Jones M."/>
            <person name="Stavrides G."/>
            <person name="Almeida J.P."/>
            <person name="Babbage A.K."/>
            <person name="Bagguley C.L."/>
            <person name="Bailey J."/>
            <person name="Barlow K.F."/>
            <person name="Bates K.N."/>
            <person name="Beard L.M."/>
            <person name="Beare D.M."/>
            <person name="Beasley O.P."/>
            <person name="Bird C.P."/>
            <person name="Blakey S.E."/>
            <person name="Bridgeman A.M."/>
            <person name="Brown A.J."/>
            <person name="Buck D."/>
            <person name="Burrill W.D."/>
            <person name="Butler A.P."/>
            <person name="Carder C."/>
            <person name="Carter N.P."/>
            <person name="Chapman J.C."/>
            <person name="Clamp M."/>
            <person name="Clark G."/>
            <person name="Clark L.N."/>
            <person name="Clark S.Y."/>
            <person name="Clee C.M."/>
            <person name="Clegg S."/>
            <person name="Cobley V.E."/>
            <person name="Collier R.E."/>
            <person name="Connor R.E."/>
            <person name="Corby N.R."/>
            <person name="Coulson A."/>
            <person name="Coville G.J."/>
            <person name="Deadman R."/>
            <person name="Dhami P.D."/>
            <person name="Dunn M."/>
            <person name="Ellington A.G."/>
            <person name="Frankland J.A."/>
            <person name="Fraser A."/>
            <person name="French L."/>
            <person name="Garner P."/>
            <person name="Grafham D.V."/>
            <person name="Griffiths C."/>
            <person name="Griffiths M.N.D."/>
            <person name="Gwilliam R."/>
            <person name="Hall R.E."/>
            <person name="Hammond S."/>
            <person name="Harley J.L."/>
            <person name="Heath P.D."/>
            <person name="Ho S."/>
            <person name="Holden J.L."/>
            <person name="Howden P.J."/>
            <person name="Huckle E."/>
            <person name="Hunt A.R."/>
            <person name="Hunt S.E."/>
            <person name="Jekosch K."/>
            <person name="Johnson C.M."/>
            <person name="Johnson D."/>
            <person name="Kay M.P."/>
            <person name="Kimberley A.M."/>
            <person name="King A."/>
            <person name="Knights A."/>
            <person name="Laird G.K."/>
            <person name="Lawlor S."/>
            <person name="Lehvaeslaiho M.H."/>
            <person name="Leversha M.A."/>
            <person name="Lloyd C."/>
            <person name="Lloyd D.M."/>
            <person name="Lovell J.D."/>
            <person name="Marsh V.L."/>
            <person name="Martin S.L."/>
            <person name="McConnachie L.J."/>
            <person name="McLay K."/>
            <person name="McMurray A.A."/>
            <person name="Milne S.A."/>
            <person name="Mistry D."/>
            <person name="Moore M.J.F."/>
            <person name="Mullikin J.C."/>
            <person name="Nickerson T."/>
            <person name="Oliver K."/>
            <person name="Parker A."/>
            <person name="Patel R."/>
            <person name="Pearce T.A.V."/>
            <person name="Peck A.I."/>
            <person name="Phillimore B.J.C.T."/>
            <person name="Prathalingam S.R."/>
            <person name="Plumb R.W."/>
            <person name="Ramsay H."/>
            <person name="Rice C.M."/>
            <person name="Ross M.T."/>
            <person name="Scott C.E."/>
            <person name="Sehra H.K."/>
            <person name="Shownkeen R."/>
            <person name="Sims S."/>
            <person name="Skuce C.D."/>
            <person name="Smith M.L."/>
            <person name="Soderlund C."/>
            <person name="Steward C.A."/>
            <person name="Sulston J.E."/>
            <person name="Swann R.M."/>
            <person name="Sycamore N."/>
            <person name="Taylor R."/>
            <person name="Tee L."/>
            <person name="Thomas D.W."/>
            <person name="Thorpe A."/>
            <person name="Tracey A."/>
            <person name="Tromans A.C."/>
            <person name="Vaudin M."/>
            <person name="Wall M."/>
            <person name="Wallis J.M."/>
            <person name="Whitehead S.L."/>
            <person name="Whittaker P."/>
            <person name="Willey D.L."/>
            <person name="Williams L."/>
            <person name="Williams S.A."/>
            <person name="Wilming L."/>
            <person name="Wray P.W."/>
            <person name="Hubbard T."/>
            <person name="Durbin R.M."/>
            <person name="Bentley D.R."/>
            <person name="Beck S."/>
            <person name="Rogers J."/>
        </authorList>
    </citation>
    <scope>NUCLEOTIDE SEQUENCE [LARGE SCALE GENOMIC DNA]</scope>
</reference>
<reference key="3">
    <citation type="submission" date="2005-09" db="EMBL/GenBank/DDBJ databases">
        <authorList>
            <person name="Mural R.J."/>
            <person name="Istrail S."/>
            <person name="Sutton G.G."/>
            <person name="Florea L."/>
            <person name="Halpern A.L."/>
            <person name="Mobarry C.M."/>
            <person name="Lippert R."/>
            <person name="Walenz B."/>
            <person name="Shatkay H."/>
            <person name="Dew I."/>
            <person name="Miller J.R."/>
            <person name="Flanigan M.J."/>
            <person name="Edwards N.J."/>
            <person name="Bolanos R."/>
            <person name="Fasulo D."/>
            <person name="Halldorsson B.V."/>
            <person name="Hannenhalli S."/>
            <person name="Turner R."/>
            <person name="Yooseph S."/>
            <person name="Lu F."/>
            <person name="Nusskern D.R."/>
            <person name="Shue B.C."/>
            <person name="Zheng X.H."/>
            <person name="Zhong F."/>
            <person name="Delcher A.L."/>
            <person name="Huson D.H."/>
            <person name="Kravitz S.A."/>
            <person name="Mouchard L."/>
            <person name="Reinert K."/>
            <person name="Remington K.A."/>
            <person name="Clark A.G."/>
            <person name="Waterman M.S."/>
            <person name="Eichler E.E."/>
            <person name="Adams M.D."/>
            <person name="Hunkapiller M.W."/>
            <person name="Myers E.W."/>
            <person name="Venter J.C."/>
        </authorList>
    </citation>
    <scope>NUCLEOTIDE SEQUENCE [LARGE SCALE GENOMIC DNA]</scope>
</reference>
<reference key="4">
    <citation type="journal article" date="2004" name="Genome Res.">
        <title>The status, quality, and expansion of the NIH full-length cDNA project: the Mammalian Gene Collection (MGC).</title>
        <authorList>
            <consortium name="The MGC Project Team"/>
        </authorList>
    </citation>
    <scope>NUCLEOTIDE SEQUENCE [LARGE SCALE MRNA] (ISOFORM 1)</scope>
    <source>
        <tissue>Cervix</tissue>
        <tissue>Muscle</tissue>
        <tissue>Prostate</tissue>
    </source>
</reference>
<reference key="5">
    <citation type="journal article" date="2007" name="BMC Genomics">
        <title>The full-ORF clone resource of the German cDNA consortium.</title>
        <authorList>
            <person name="Bechtel S."/>
            <person name="Rosenfelder H."/>
            <person name="Duda A."/>
            <person name="Schmidt C.P."/>
            <person name="Ernst U."/>
            <person name="Wellenreuther R."/>
            <person name="Mehrle A."/>
            <person name="Schuster C."/>
            <person name="Bahr A."/>
            <person name="Bloecker H."/>
            <person name="Heubner D."/>
            <person name="Hoerlein A."/>
            <person name="Michel G."/>
            <person name="Wedler H."/>
            <person name="Koehrer K."/>
            <person name="Ottenwaelder B."/>
            <person name="Poustka A."/>
            <person name="Wiemann S."/>
            <person name="Schupp I."/>
        </authorList>
    </citation>
    <scope>NUCLEOTIDE SEQUENCE [LARGE SCALE MRNA] OF 238-797 (ISOFORM 1)</scope>
    <source>
        <tissue>Mammary cancer</tissue>
    </source>
</reference>
<reference key="6">
    <citation type="journal article" date="2010" name="Genes Dev.">
        <title>Myc protein is stabilized by suppression of a novel E3 ligase complex in cancer cells.</title>
        <authorList>
            <person name="Choi S.H."/>
            <person name="Wright J.B."/>
            <person name="Gerber S.A."/>
            <person name="Cole M.D."/>
        </authorList>
    </citation>
    <scope>FUNCTION</scope>
    <scope>IDENTIFICATION IN A DCX (DDB1-CUL4-X-BOX) E3 UBIQUITIN-PROTEIN LIGASE COMPLEX</scope>
    <scope>INTERACTION WITH MYC</scope>
</reference>
<reference key="7">
    <citation type="journal article" date="2010" name="Nat. Struct. Mol. Biol.">
        <title>A promiscuous alpha-helical motif anchors viral hijackers and substrate receptors to the CUL4-DDB1 ubiquitin ligase machinery.</title>
        <authorList>
            <person name="Li T."/>
            <person name="Robert E.I."/>
            <person name="van Breugel P.C."/>
            <person name="Strubin M."/>
            <person name="Zheng N."/>
        </authorList>
    </citation>
    <scope>INTERACTION WITH DDB1</scope>
</reference>
<reference key="8">
    <citation type="journal article" date="2012" name="Proc. Natl. Acad. Sci. U.S.A.">
        <title>N-terminal acetylome analyses and functional insights of the N-terminal acetyltransferase NatB.</title>
        <authorList>
            <person name="Van Damme P."/>
            <person name="Lasa M."/>
            <person name="Polevoda B."/>
            <person name="Gazquez C."/>
            <person name="Elosegui-Artola A."/>
            <person name="Kim D.S."/>
            <person name="De Juan-Pardo E."/>
            <person name="Demeyer K."/>
            <person name="Hole K."/>
            <person name="Larrea E."/>
            <person name="Timmerman E."/>
            <person name="Prieto J."/>
            <person name="Arnesen T."/>
            <person name="Sherman F."/>
            <person name="Gevaert K."/>
            <person name="Aldabe R."/>
        </authorList>
    </citation>
    <scope>ACETYLATION [LARGE SCALE ANALYSIS] AT ALA-2</scope>
    <scope>CLEAVAGE OF INITIATOR METHIONINE [LARGE SCALE ANALYSIS]</scope>
    <scope>IDENTIFICATION BY MASS SPECTROMETRY [LARGE SCALE ANALYSIS]</scope>
</reference>
<reference key="9">
    <citation type="journal article" date="2015" name="Cell Cycle">
        <title>The G1 phase E3 ubiquitin ligase TRUSS that gets deregulated in human cancers is a novel substrate of the S-phase E3 ubiquitin ligase Skp2.</title>
        <authorList>
            <person name="Jamal A."/>
            <person name="Swarnalatha M."/>
            <person name="Sultana S."/>
            <person name="Joshi P."/>
            <person name="Panda S.K."/>
            <person name="Kumar V."/>
        </authorList>
    </citation>
    <scope>SUBCELLULAR LOCATION</scope>
    <scope>UBIQUITINATION</scope>
    <scope>PHOSPHORYLATION</scope>
    <scope>INTERACTION WITH HEPATITIS B VIRUS PROTEIN X (MICROBIAL INFECTION)</scope>
</reference>
<reference key="10">
    <citation type="journal article" date="2018" name="Cell">
        <title>The eukaryotic proteome is shaped by E3 ubiquitin ligases targeting C-terminal degrons.</title>
        <authorList>
            <person name="Koren I."/>
            <person name="Timms R.T."/>
            <person name="Kula T."/>
            <person name="Xu Q."/>
            <person name="Li M.Z."/>
            <person name="Elledge S.J."/>
        </authorList>
    </citation>
    <scope>FUNCTION</scope>
    <scope>PATHWAY</scope>
    <scope>IDENTIFICATION IN A CRL4 E3 UBIQUITIN-PROTEIN LIGASE COMPLEX</scope>
</reference>
<proteinExistence type="evidence at protein level"/>
<gene>
    <name evidence="7 10" type="primary">TRPC4AP</name>
    <name evidence="10" type="synonym">C20orf188</name>
    <name type="synonym">TRRP4AP</name>
</gene>
<feature type="initiator methionine" description="Removed" evidence="11">
    <location>
        <position position="1"/>
    </location>
</feature>
<feature type="chain" id="PRO_0000072641" description="Short transient receptor potential channel 4-associated protein">
    <location>
        <begin position="2"/>
        <end position="797"/>
    </location>
</feature>
<feature type="region of interest" description="Interaction with TNFRSF1A" evidence="1">
    <location>
        <begin position="2"/>
        <end position="400"/>
    </location>
</feature>
<feature type="modified residue" description="N-acetylalanine" evidence="11">
    <location>
        <position position="2"/>
    </location>
</feature>
<feature type="splice variant" id="VSP_054231" description="In isoform 3." evidence="6">
    <location>
        <begin position="351"/>
        <end position="358"/>
    </location>
</feature>
<feature type="splice variant" id="VSP_003982" description="In isoform 2." evidence="6">
    <location>
        <begin position="533"/>
        <end position="797"/>
    </location>
</feature>
<keyword id="KW-0007">Acetylation</keyword>
<keyword id="KW-0025">Alternative splicing</keyword>
<keyword id="KW-0963">Cytoplasm</keyword>
<keyword id="KW-0945">Host-virus interaction</keyword>
<keyword id="KW-0597">Phosphoprotein</keyword>
<keyword id="KW-1267">Proteomics identification</keyword>
<keyword id="KW-1185">Reference proteome</keyword>
<keyword id="KW-0832">Ubl conjugation</keyword>
<keyword id="KW-0833">Ubl conjugation pathway</keyword>
<evidence type="ECO:0000250" key="1">
    <source>
        <dbReference type="UniProtKB" id="Q9JLV2"/>
    </source>
</evidence>
<evidence type="ECO:0000269" key="2">
    <source>
    </source>
</evidence>
<evidence type="ECO:0000269" key="3">
    <source>
    </source>
</evidence>
<evidence type="ECO:0000269" key="4">
    <source>
    </source>
</evidence>
<evidence type="ECO:0000269" key="5">
    <source>
    </source>
</evidence>
<evidence type="ECO:0000303" key="6">
    <source>
    </source>
</evidence>
<evidence type="ECO:0000303" key="7">
    <source>
    </source>
</evidence>
<evidence type="ECO:0000303" key="8">
    <source>
    </source>
</evidence>
<evidence type="ECO:0000305" key="9"/>
<evidence type="ECO:0000312" key="10">
    <source>
        <dbReference type="HGNC" id="HGNC:16181"/>
    </source>
</evidence>
<evidence type="ECO:0007744" key="11">
    <source>
    </source>
</evidence>
<dbReference type="EMBL" id="AK074106">
    <property type="protein sequence ID" value="BAB84932.1"/>
    <property type="status" value="ALT_FRAME"/>
    <property type="molecule type" value="mRNA"/>
</dbReference>
<dbReference type="EMBL" id="AB590540">
    <property type="protein sequence ID" value="BAJ20695.1"/>
    <property type="molecule type" value="mRNA"/>
</dbReference>
<dbReference type="EMBL" id="AL132825">
    <property type="status" value="NOT_ANNOTATED_CDS"/>
    <property type="molecule type" value="Genomic_DNA"/>
</dbReference>
<dbReference type="EMBL" id="CH471077">
    <property type="protein sequence ID" value="EAW76233.1"/>
    <property type="molecule type" value="Genomic_DNA"/>
</dbReference>
<dbReference type="EMBL" id="CH471077">
    <property type="protein sequence ID" value="EAW76235.1"/>
    <property type="molecule type" value="Genomic_DNA"/>
</dbReference>
<dbReference type="EMBL" id="CH471077">
    <property type="protein sequence ID" value="EAW76229.1"/>
    <property type="molecule type" value="Genomic_DNA"/>
</dbReference>
<dbReference type="EMBL" id="CH471077">
    <property type="protein sequence ID" value="EAW76234.1"/>
    <property type="molecule type" value="Genomic_DNA"/>
</dbReference>
<dbReference type="EMBL" id="BC001323">
    <property type="protein sequence ID" value="AAH01323.1"/>
    <property type="molecule type" value="mRNA"/>
</dbReference>
<dbReference type="EMBL" id="BC008836">
    <property type="protein sequence ID" value="AAH08836.2"/>
    <property type="molecule type" value="mRNA"/>
</dbReference>
<dbReference type="EMBL" id="BC013144">
    <property type="protein sequence ID" value="AAH13144.1"/>
    <property type="molecule type" value="mRNA"/>
</dbReference>
<dbReference type="EMBL" id="AL117480">
    <property type="protein sequence ID" value="CAB55953.1"/>
    <property type="molecule type" value="mRNA"/>
</dbReference>
<dbReference type="CCDS" id="CCDS13246.1">
    <molecule id="Q8TEL6-1"/>
</dbReference>
<dbReference type="CCDS" id="CCDS46591.1">
    <molecule id="Q8TEL6-3"/>
</dbReference>
<dbReference type="PIR" id="T17263">
    <property type="entry name" value="T17263"/>
</dbReference>
<dbReference type="RefSeq" id="NP_056453.1">
    <molecule id="Q8TEL6-1"/>
    <property type="nucleotide sequence ID" value="NM_015638.3"/>
</dbReference>
<dbReference type="RefSeq" id="NP_955400.1">
    <molecule id="Q8TEL6-3"/>
    <property type="nucleotide sequence ID" value="NM_199368.2"/>
</dbReference>
<dbReference type="RefSeq" id="XP_047296051.1">
    <molecule id="Q8TEL6-1"/>
    <property type="nucleotide sequence ID" value="XM_047440095.1"/>
</dbReference>
<dbReference type="RefSeq" id="XP_047296052.1">
    <molecule id="Q8TEL6-3"/>
    <property type="nucleotide sequence ID" value="XM_047440096.1"/>
</dbReference>
<dbReference type="RefSeq" id="XP_054179312.1">
    <molecule id="Q8TEL6-1"/>
    <property type="nucleotide sequence ID" value="XM_054323337.1"/>
</dbReference>
<dbReference type="RefSeq" id="XP_054179313.1">
    <molecule id="Q8TEL6-3"/>
    <property type="nucleotide sequence ID" value="XM_054323338.1"/>
</dbReference>
<dbReference type="BioGRID" id="117569">
    <property type="interactions" value="112"/>
</dbReference>
<dbReference type="DIP" id="DIP-42719N"/>
<dbReference type="FunCoup" id="Q8TEL6">
    <property type="interactions" value="729"/>
</dbReference>
<dbReference type="IntAct" id="Q8TEL6">
    <property type="interactions" value="61"/>
</dbReference>
<dbReference type="MINT" id="Q8TEL6"/>
<dbReference type="STRING" id="9606.ENSP00000252015"/>
<dbReference type="GlyGen" id="Q8TEL6">
    <property type="glycosylation" value="1 site, 1 O-linked glycan (1 site)"/>
</dbReference>
<dbReference type="iPTMnet" id="Q8TEL6"/>
<dbReference type="PhosphoSitePlus" id="Q8TEL6"/>
<dbReference type="BioMuta" id="TRPC4AP"/>
<dbReference type="DMDM" id="25091357"/>
<dbReference type="jPOST" id="Q8TEL6"/>
<dbReference type="MassIVE" id="Q8TEL6"/>
<dbReference type="PaxDb" id="9606-ENSP00000252015"/>
<dbReference type="PeptideAtlas" id="Q8TEL6"/>
<dbReference type="ProteomicsDB" id="15211"/>
<dbReference type="ProteomicsDB" id="74470">
    <molecule id="Q8TEL6-1"/>
</dbReference>
<dbReference type="ProteomicsDB" id="74471">
    <molecule id="Q8TEL6-2"/>
</dbReference>
<dbReference type="Pumba" id="Q8TEL6"/>
<dbReference type="Antibodypedia" id="25963">
    <property type="antibodies" value="192 antibodies from 29 providers"/>
</dbReference>
<dbReference type="DNASU" id="26133"/>
<dbReference type="Ensembl" id="ENST00000252015.3">
    <molecule id="Q8TEL6-1"/>
    <property type="protein sequence ID" value="ENSP00000252015.2"/>
    <property type="gene ID" value="ENSG00000100991.12"/>
</dbReference>
<dbReference type="Ensembl" id="ENST00000451813.6">
    <molecule id="Q8TEL6-3"/>
    <property type="protein sequence ID" value="ENSP00000400614.1"/>
    <property type="gene ID" value="ENSG00000100991.12"/>
</dbReference>
<dbReference type="GeneID" id="26133"/>
<dbReference type="KEGG" id="hsa:26133"/>
<dbReference type="MANE-Select" id="ENST00000252015.3">
    <property type="protein sequence ID" value="ENSP00000252015.2"/>
    <property type="RefSeq nucleotide sequence ID" value="NM_015638.3"/>
    <property type="RefSeq protein sequence ID" value="NP_056453.1"/>
</dbReference>
<dbReference type="UCSC" id="uc002xbk.4">
    <molecule id="Q8TEL6-1"/>
    <property type="organism name" value="human"/>
</dbReference>
<dbReference type="AGR" id="HGNC:16181"/>
<dbReference type="CTD" id="26133"/>
<dbReference type="DisGeNET" id="26133"/>
<dbReference type="GeneCards" id="TRPC4AP"/>
<dbReference type="HGNC" id="HGNC:16181">
    <property type="gene designation" value="TRPC4AP"/>
</dbReference>
<dbReference type="HPA" id="ENSG00000100991">
    <property type="expression patterns" value="Low tissue specificity"/>
</dbReference>
<dbReference type="MIM" id="608430">
    <property type="type" value="gene"/>
</dbReference>
<dbReference type="neXtProt" id="NX_Q8TEL6"/>
<dbReference type="OpenTargets" id="ENSG00000100991"/>
<dbReference type="PharmGKB" id="PA25730"/>
<dbReference type="VEuPathDB" id="HostDB:ENSG00000100991"/>
<dbReference type="eggNOG" id="ENOG502QQ1C">
    <property type="taxonomic scope" value="Eukaryota"/>
</dbReference>
<dbReference type="GeneTree" id="ENSGT00390000018330"/>
<dbReference type="HOGENOM" id="CLU_015792_1_0_1"/>
<dbReference type="InParanoid" id="Q8TEL6"/>
<dbReference type="OMA" id="YNSCICT"/>
<dbReference type="OrthoDB" id="1866965at2759"/>
<dbReference type="PAN-GO" id="Q8TEL6">
    <property type="GO annotations" value="3 GO annotations based on evolutionary models"/>
</dbReference>
<dbReference type="PhylomeDB" id="Q8TEL6"/>
<dbReference type="TreeFam" id="TF329145"/>
<dbReference type="PathwayCommons" id="Q8TEL6"/>
<dbReference type="Reactome" id="R-HSA-3295583">
    <property type="pathway name" value="TRP channels"/>
</dbReference>
<dbReference type="SignaLink" id="Q8TEL6"/>
<dbReference type="SIGNOR" id="Q8TEL6"/>
<dbReference type="UniPathway" id="UPA00143"/>
<dbReference type="BioGRID-ORCS" id="26133">
    <property type="hits" value="17 hits in 1160 CRISPR screens"/>
</dbReference>
<dbReference type="ChiTaRS" id="TRPC4AP">
    <property type="organism name" value="human"/>
</dbReference>
<dbReference type="GeneWiki" id="TRPC4AP"/>
<dbReference type="GenomeRNAi" id="26133"/>
<dbReference type="Pharos" id="Q8TEL6">
    <property type="development level" value="Tbio"/>
</dbReference>
<dbReference type="PRO" id="PR:Q8TEL6"/>
<dbReference type="Proteomes" id="UP000005640">
    <property type="component" value="Chromosome 20"/>
</dbReference>
<dbReference type="RNAct" id="Q8TEL6">
    <property type="molecule type" value="protein"/>
</dbReference>
<dbReference type="Bgee" id="ENSG00000100991">
    <property type="expression patterns" value="Expressed in granulocyte and 201 other cell types or tissues"/>
</dbReference>
<dbReference type="GO" id="GO:0080008">
    <property type="term" value="C:Cul4-RING E3 ubiquitin ligase complex"/>
    <property type="evidence" value="ECO:0000314"/>
    <property type="project" value="UniProtKB"/>
</dbReference>
<dbReference type="GO" id="GO:0031464">
    <property type="term" value="C:Cul4A-RING E3 ubiquitin ligase complex"/>
    <property type="evidence" value="ECO:0000314"/>
    <property type="project" value="UniProtKB"/>
</dbReference>
<dbReference type="GO" id="GO:0005829">
    <property type="term" value="C:cytosol"/>
    <property type="evidence" value="ECO:0000314"/>
    <property type="project" value="HPA"/>
</dbReference>
<dbReference type="GO" id="GO:0048471">
    <property type="term" value="C:perinuclear region of cytoplasm"/>
    <property type="evidence" value="ECO:0007669"/>
    <property type="project" value="UniProtKB-SubCell"/>
</dbReference>
<dbReference type="GO" id="GO:0005886">
    <property type="term" value="C:plasma membrane"/>
    <property type="evidence" value="ECO:0000304"/>
    <property type="project" value="Reactome"/>
</dbReference>
<dbReference type="GO" id="GO:0005262">
    <property type="term" value="F:calcium channel activity"/>
    <property type="evidence" value="ECO:0000304"/>
    <property type="project" value="Reactome"/>
</dbReference>
<dbReference type="GO" id="GO:0019902">
    <property type="term" value="F:phosphatase binding"/>
    <property type="evidence" value="ECO:0000314"/>
    <property type="project" value="UniProtKB"/>
</dbReference>
<dbReference type="GO" id="GO:1990756">
    <property type="term" value="F:ubiquitin-like ligase-substrate adaptor activity"/>
    <property type="evidence" value="ECO:0000314"/>
    <property type="project" value="UniProtKB"/>
</dbReference>
<dbReference type="GO" id="GO:0070588">
    <property type="term" value="P:calcium ion transmembrane transport"/>
    <property type="evidence" value="ECO:0000304"/>
    <property type="project" value="Reactome"/>
</dbReference>
<dbReference type="GO" id="GO:0048820">
    <property type="term" value="P:hair follicle maturation"/>
    <property type="evidence" value="ECO:0007669"/>
    <property type="project" value="Ensembl"/>
</dbReference>
<dbReference type="GO" id="GO:0016567">
    <property type="term" value="P:protein ubiquitination"/>
    <property type="evidence" value="ECO:0000314"/>
    <property type="project" value="UniProtKB"/>
</dbReference>
<dbReference type="GO" id="GO:0006511">
    <property type="term" value="P:ubiquitin-dependent protein catabolic process"/>
    <property type="evidence" value="ECO:0000314"/>
    <property type="project" value="UniProtKB"/>
</dbReference>
<dbReference type="GO" id="GO:0140627">
    <property type="term" value="P:ubiquitin-dependent protein catabolic process via the C-end degron rule pathway"/>
    <property type="evidence" value="ECO:0000314"/>
    <property type="project" value="UniProtKB"/>
</dbReference>
<dbReference type="InterPro" id="IPR016024">
    <property type="entry name" value="ARM-type_fold"/>
</dbReference>
<dbReference type="InterPro" id="IPR022162">
    <property type="entry name" value="TRPC4AP"/>
</dbReference>
<dbReference type="PANTHER" id="PTHR31743:SF1">
    <property type="entry name" value="SHORT TRANSIENT RECEPTOR POTENTIAL CHANNEL 4-ASSOCIATED PROTEIN"/>
    <property type="match status" value="1"/>
</dbReference>
<dbReference type="PANTHER" id="PTHR31743">
    <property type="entry name" value="TRANSIENT RECEPTOR POTENTIAL CHANNEL 4-ASSOCIATED PROTEIN TCPC4AP"/>
    <property type="match status" value="1"/>
</dbReference>
<dbReference type="Pfam" id="PF12463">
    <property type="entry name" value="DUF3689"/>
    <property type="match status" value="1"/>
</dbReference>
<dbReference type="SUPFAM" id="SSF48371">
    <property type="entry name" value="ARM repeat"/>
    <property type="match status" value="1"/>
</dbReference>
<protein>
    <recommendedName>
        <fullName evidence="9">Short transient receptor potential channel 4-associated protein</fullName>
        <shortName evidence="7">Trp4-associated protein</shortName>
        <shortName evidence="7">Trpc4-associated protein</shortName>
    </recommendedName>
    <alternativeName>
        <fullName>Protein TAP1</fullName>
    </alternativeName>
    <alternativeName>
        <fullName evidence="8">TNF-receptor ubiquitous scaffolding/signaling protein</fullName>
        <shortName evidence="8">Protein TRUSS</shortName>
    </alternativeName>
</protein>
<accession>Q8TEL6</accession>
<accession>E1P5Q0</accession>
<accession>E1P5Q1</accession>
<accession>Q96H82</accession>
<accession>Q9BVB8</accession>
<accession>Q9H429</accession>
<accession>Q9UFS6</accession>